<proteinExistence type="evidence at protein level"/>
<protein>
    <recommendedName>
        <fullName evidence="4">Conotoxin Am6.3</fullName>
    </recommendedName>
</protein>
<comment type="function">
    <text evidence="4">Probable toxin that inhibits ion channels.</text>
</comment>
<comment type="subcellular location">
    <subcellularLocation>
        <location evidence="3">Secreted</location>
    </subcellularLocation>
</comment>
<comment type="tissue specificity">
    <text evidence="5">Expressed by the venom duct.</text>
</comment>
<comment type="domain">
    <text evidence="4">The cysteine framework is VI/VII (C-C-CC-C-C).</text>
</comment>
<comment type="domain">
    <text evidence="4">The presence of a 'disulfide through disulfide knot' structurally defines this protein as a knottin.</text>
</comment>
<comment type="PTM">
    <text evidence="3">Is not hydroxylated.</text>
</comment>
<comment type="similarity">
    <text evidence="4">Belongs to the conotoxin O1 superfamily.</text>
</comment>
<evidence type="ECO:0000250" key="1">
    <source>
        <dbReference type="UniProtKB" id="Q26443"/>
    </source>
</evidence>
<evidence type="ECO:0000255" key="2"/>
<evidence type="ECO:0000269" key="3">
    <source>
    </source>
</evidence>
<evidence type="ECO:0000305" key="4"/>
<evidence type="ECO:0000305" key="5">
    <source>
    </source>
</evidence>
<accession>A0A3G3C7S6</accession>
<organism>
    <name type="scientific">Conus amadis</name>
    <name type="common">Amadis cone</name>
    <dbReference type="NCBI Taxonomy" id="198732"/>
    <lineage>
        <taxon>Eukaryota</taxon>
        <taxon>Metazoa</taxon>
        <taxon>Spiralia</taxon>
        <taxon>Lophotrochozoa</taxon>
        <taxon>Mollusca</taxon>
        <taxon>Gastropoda</taxon>
        <taxon>Caenogastropoda</taxon>
        <taxon>Neogastropoda</taxon>
        <taxon>Conoidea</taxon>
        <taxon>Conidae</taxon>
        <taxon>Conus</taxon>
        <taxon>Leptoconus</taxon>
    </lineage>
</organism>
<sequence length="76" mass="8452">MKLTCMMIIAVLFLTAWTFATADDSGNGLENLFSKAHHEMKNPEASKLNKRCLAKGDFCNLITQDCCDGICFIFCP</sequence>
<keyword id="KW-0903">Direct protein sequencing</keyword>
<keyword id="KW-1015">Disulfide bond</keyword>
<keyword id="KW-0872">Ion channel impairing toxin</keyword>
<keyword id="KW-0960">Knottin</keyword>
<keyword id="KW-0964">Secreted</keyword>
<keyword id="KW-0732">Signal</keyword>
<keyword id="KW-0800">Toxin</keyword>
<name>O163_CONAA</name>
<feature type="signal peptide" evidence="2">
    <location>
        <begin position="1"/>
        <end position="22"/>
    </location>
</feature>
<feature type="peptide" id="PRO_5018290338" description="Conotoxin Am6.3" evidence="3">
    <location>
        <begin position="23"/>
        <end position="76"/>
    </location>
</feature>
<feature type="disulfide bond" evidence="1">
    <location>
        <begin position="52"/>
        <end position="67"/>
    </location>
</feature>
<feature type="disulfide bond" evidence="1">
    <location>
        <begin position="59"/>
        <end position="71"/>
    </location>
</feature>
<feature type="disulfide bond" evidence="1">
    <location>
        <begin position="66"/>
        <end position="75"/>
    </location>
</feature>
<reference key="1">
    <citation type="journal article" date="2019" name="J. Proteomics">
        <title>Cone snail prolyl-4-hydroxylase alpha-subunit sequences derived from transcriptomic data and mass spectrometric analysis of variable proline hydroxylation in C. amadis venom.</title>
        <authorList>
            <person name="Vijayasarathy M."/>
            <person name="Balaram P."/>
        </authorList>
    </citation>
    <scope>NUCLEOTIDE SEQUENCE [MRNA]</scope>
    <scope>PROTEIN SEQUENCE OF 23-76</scope>
    <scope>SUBCELLULAR LOCATION</scope>
    <scope>IDENTIFICATION BY MASS SPECTROMETRY</scope>
    <source>
        <tissue>Venom</tissue>
        <tissue>Venom duct</tissue>
    </source>
</reference>
<dbReference type="EMBL" id="MH282823">
    <property type="protein sequence ID" value="AYP73030.1"/>
    <property type="molecule type" value="mRNA"/>
</dbReference>
<dbReference type="SMR" id="A0A3G3C7S6"/>
<dbReference type="GO" id="GO:0005576">
    <property type="term" value="C:extracellular region"/>
    <property type="evidence" value="ECO:0007669"/>
    <property type="project" value="UniProtKB-SubCell"/>
</dbReference>
<dbReference type="GO" id="GO:0008200">
    <property type="term" value="F:ion channel inhibitor activity"/>
    <property type="evidence" value="ECO:0007669"/>
    <property type="project" value="InterPro"/>
</dbReference>
<dbReference type="GO" id="GO:0090729">
    <property type="term" value="F:toxin activity"/>
    <property type="evidence" value="ECO:0007669"/>
    <property type="project" value="UniProtKB-KW"/>
</dbReference>
<dbReference type="InterPro" id="IPR004214">
    <property type="entry name" value="Conotoxin"/>
</dbReference>
<dbReference type="InterPro" id="IPR012321">
    <property type="entry name" value="Conotoxin_omega-typ_CS"/>
</dbReference>
<dbReference type="Pfam" id="PF02950">
    <property type="entry name" value="Conotoxin"/>
    <property type="match status" value="1"/>
</dbReference>
<dbReference type="SUPFAM" id="SSF57059">
    <property type="entry name" value="omega toxin-like"/>
    <property type="match status" value="1"/>
</dbReference>
<dbReference type="PROSITE" id="PS60004">
    <property type="entry name" value="OMEGA_CONOTOXIN"/>
    <property type="match status" value="1"/>
</dbReference>